<reference key="1">
    <citation type="journal article" date="1997" name="J. Bacteriol.">
        <title>Analysis of the Bacillus subtilis S10 ribosomal protein gene cluster identifies two promoters that may be responsible for transcription of the entire 15-kilobase S10-spc-alpha cluster.</title>
        <authorList>
            <person name="Li X."/>
            <person name="Lindahl L."/>
            <person name="Sha Y."/>
            <person name="Zengel J.M."/>
        </authorList>
    </citation>
    <scope>NUCLEOTIDE SEQUENCE [GENOMIC DNA]</scope>
    <source>
        <strain>SG38</strain>
    </source>
</reference>
<reference key="2">
    <citation type="journal article" date="1996" name="Microbiology">
        <title>Sequence analysis of a 50 kb region between spo0H and rrnH on the Bacillus subtilis chromosome.</title>
        <authorList>
            <person name="Yasumoto K."/>
            <person name="Liu H."/>
            <person name="Jeong S.M."/>
            <person name="Ohashi Y."/>
            <person name="Kakinuma S."/>
            <person name="Tanaka K."/>
            <person name="Kawamura F."/>
            <person name="Yoshikawa H."/>
            <person name="Takahashi H."/>
        </authorList>
    </citation>
    <scope>NUCLEOTIDE SEQUENCE [GENOMIC DNA]</scope>
    <source>
        <strain>168</strain>
    </source>
</reference>
<reference key="3">
    <citation type="journal article" date="1997" name="Nature">
        <title>The complete genome sequence of the Gram-positive bacterium Bacillus subtilis.</title>
        <authorList>
            <person name="Kunst F."/>
            <person name="Ogasawara N."/>
            <person name="Moszer I."/>
            <person name="Albertini A.M."/>
            <person name="Alloni G."/>
            <person name="Azevedo V."/>
            <person name="Bertero M.G."/>
            <person name="Bessieres P."/>
            <person name="Bolotin A."/>
            <person name="Borchert S."/>
            <person name="Borriss R."/>
            <person name="Boursier L."/>
            <person name="Brans A."/>
            <person name="Braun M."/>
            <person name="Brignell S.C."/>
            <person name="Bron S."/>
            <person name="Brouillet S."/>
            <person name="Bruschi C.V."/>
            <person name="Caldwell B."/>
            <person name="Capuano V."/>
            <person name="Carter N.M."/>
            <person name="Choi S.-K."/>
            <person name="Codani J.-J."/>
            <person name="Connerton I.F."/>
            <person name="Cummings N.J."/>
            <person name="Daniel R.A."/>
            <person name="Denizot F."/>
            <person name="Devine K.M."/>
            <person name="Duesterhoeft A."/>
            <person name="Ehrlich S.D."/>
            <person name="Emmerson P.T."/>
            <person name="Entian K.-D."/>
            <person name="Errington J."/>
            <person name="Fabret C."/>
            <person name="Ferrari E."/>
            <person name="Foulger D."/>
            <person name="Fritz C."/>
            <person name="Fujita M."/>
            <person name="Fujita Y."/>
            <person name="Fuma S."/>
            <person name="Galizzi A."/>
            <person name="Galleron N."/>
            <person name="Ghim S.-Y."/>
            <person name="Glaser P."/>
            <person name="Goffeau A."/>
            <person name="Golightly E.J."/>
            <person name="Grandi G."/>
            <person name="Guiseppi G."/>
            <person name="Guy B.J."/>
            <person name="Haga K."/>
            <person name="Haiech J."/>
            <person name="Harwood C.R."/>
            <person name="Henaut A."/>
            <person name="Hilbert H."/>
            <person name="Holsappel S."/>
            <person name="Hosono S."/>
            <person name="Hullo M.-F."/>
            <person name="Itaya M."/>
            <person name="Jones L.-M."/>
            <person name="Joris B."/>
            <person name="Karamata D."/>
            <person name="Kasahara Y."/>
            <person name="Klaerr-Blanchard M."/>
            <person name="Klein C."/>
            <person name="Kobayashi Y."/>
            <person name="Koetter P."/>
            <person name="Koningstein G."/>
            <person name="Krogh S."/>
            <person name="Kumano M."/>
            <person name="Kurita K."/>
            <person name="Lapidus A."/>
            <person name="Lardinois S."/>
            <person name="Lauber J."/>
            <person name="Lazarevic V."/>
            <person name="Lee S.-M."/>
            <person name="Levine A."/>
            <person name="Liu H."/>
            <person name="Masuda S."/>
            <person name="Mauel C."/>
            <person name="Medigue C."/>
            <person name="Medina N."/>
            <person name="Mellado R.P."/>
            <person name="Mizuno M."/>
            <person name="Moestl D."/>
            <person name="Nakai S."/>
            <person name="Noback M."/>
            <person name="Noone D."/>
            <person name="O'Reilly M."/>
            <person name="Ogawa K."/>
            <person name="Ogiwara A."/>
            <person name="Oudega B."/>
            <person name="Park S.-H."/>
            <person name="Parro V."/>
            <person name="Pohl T.M."/>
            <person name="Portetelle D."/>
            <person name="Porwollik S."/>
            <person name="Prescott A.M."/>
            <person name="Presecan E."/>
            <person name="Pujic P."/>
            <person name="Purnelle B."/>
            <person name="Rapoport G."/>
            <person name="Rey M."/>
            <person name="Reynolds S."/>
            <person name="Rieger M."/>
            <person name="Rivolta C."/>
            <person name="Rocha E."/>
            <person name="Roche B."/>
            <person name="Rose M."/>
            <person name="Sadaie Y."/>
            <person name="Sato T."/>
            <person name="Scanlan E."/>
            <person name="Schleich S."/>
            <person name="Schroeter R."/>
            <person name="Scoffone F."/>
            <person name="Sekiguchi J."/>
            <person name="Sekowska A."/>
            <person name="Seror S.J."/>
            <person name="Serror P."/>
            <person name="Shin B.-S."/>
            <person name="Soldo B."/>
            <person name="Sorokin A."/>
            <person name="Tacconi E."/>
            <person name="Takagi T."/>
            <person name="Takahashi H."/>
            <person name="Takemaru K."/>
            <person name="Takeuchi M."/>
            <person name="Tamakoshi A."/>
            <person name="Tanaka T."/>
            <person name="Terpstra P."/>
            <person name="Tognoni A."/>
            <person name="Tosato V."/>
            <person name="Uchiyama S."/>
            <person name="Vandenbol M."/>
            <person name="Vannier F."/>
            <person name="Vassarotti A."/>
            <person name="Viari A."/>
            <person name="Wambutt R."/>
            <person name="Wedler E."/>
            <person name="Wedler H."/>
            <person name="Weitzenegger T."/>
            <person name="Winters P."/>
            <person name="Wipat A."/>
            <person name="Yamamoto H."/>
            <person name="Yamane K."/>
            <person name="Yasumoto K."/>
            <person name="Yata K."/>
            <person name="Yoshida K."/>
            <person name="Yoshikawa H.-F."/>
            <person name="Zumstein E."/>
            <person name="Yoshikawa H."/>
            <person name="Danchin A."/>
        </authorList>
    </citation>
    <scope>NUCLEOTIDE SEQUENCE [LARGE SCALE GENOMIC DNA]</scope>
    <source>
        <strain>168</strain>
    </source>
</reference>
<reference key="4">
    <citation type="journal article" date="1989" name="Nucleic Acids Res.">
        <title>Cloning and analysis of the spc ribosomal protein operon of Bacillus subtilis: comparison with the spc operon of Escherichia coli.</title>
        <authorList>
            <person name="Henkin T.M."/>
            <person name="Moon S.H."/>
            <person name="Mattheakis L.C."/>
            <person name="Nomura M."/>
        </authorList>
    </citation>
    <scope>NUCLEOTIDE SEQUENCE [GENOMIC DNA] OF 39-144</scope>
    <source>
        <strain>168</strain>
    </source>
</reference>
<reference key="5">
    <citation type="journal article" date="1996" name="Gene">
        <title>Genetic and transcriptional organization of the Bacillus subtilis spc-alpha region.</title>
        <authorList>
            <person name="Suh J.-W."/>
            <person name="Boylan S.A."/>
            <person name="Oh S.H."/>
            <person name="Price C.W."/>
        </authorList>
    </citation>
    <scope>NUCLEOTIDE SEQUENCE [GENOMIC DNA] OF 96-144</scope>
    <source>
        <strain>168 / Marburg / ATCC 6051 / DSM 10 / JCM 1465 / NBRC 13719 / NCIMB 3610 / NRRL NRS-744 / VKM B-501</strain>
    </source>
</reference>
<reference evidence="4 5" key="6">
    <citation type="journal article" date="2018" name="Proc. Natl. Acad. Sci. U.S.A.">
        <title>Structural basis for antibiotic resistance mediated by the Bacillus subtilis ABCF ATPase VmlR.</title>
        <authorList>
            <person name="Crowe-McAuliffe C."/>
            <person name="Graf M."/>
            <person name="Huter P."/>
            <person name="Takada H."/>
            <person name="Abdelshahid M."/>
            <person name="Novacek J."/>
            <person name="Murina V."/>
            <person name="Atkinson G.C."/>
            <person name="Hauryliuk V."/>
            <person name="Wilson D.N."/>
        </authorList>
    </citation>
    <scope>STRUCTURE BY ELECTRON MICROSCOPY (3.10 ANGSTROMS) OF 1-144 WITH AND WITHOUT VIRGINIAMYCIN M</scope>
</reference>
<organism>
    <name type="scientific">Bacillus subtilis (strain 168)</name>
    <dbReference type="NCBI Taxonomy" id="224308"/>
    <lineage>
        <taxon>Bacteria</taxon>
        <taxon>Bacillati</taxon>
        <taxon>Bacillota</taxon>
        <taxon>Bacilli</taxon>
        <taxon>Bacillales</taxon>
        <taxon>Bacillaceae</taxon>
        <taxon>Bacillus</taxon>
    </lineage>
</organism>
<accession>P14577</accession>
<keyword id="KW-0002">3D-structure</keyword>
<keyword id="KW-1185">Reference proteome</keyword>
<keyword id="KW-0687">Ribonucleoprotein</keyword>
<keyword id="KW-0689">Ribosomal protein</keyword>
<keyword id="KW-0694">RNA-binding</keyword>
<keyword id="KW-0699">rRNA-binding</keyword>
<keyword id="KW-0820">tRNA-binding</keyword>
<comment type="function">
    <text evidence="1">Binds 23S rRNA and is also seen to make contacts with the A and possibly P site tRNAs.</text>
</comment>
<comment type="subunit">
    <text evidence="2">Part of the 50S ribosomal subunit.</text>
</comment>
<comment type="similarity">
    <text evidence="1">Belongs to the universal ribosomal protein uL16 family.</text>
</comment>
<evidence type="ECO:0000255" key="1">
    <source>
        <dbReference type="HAMAP-Rule" id="MF_01342"/>
    </source>
</evidence>
<evidence type="ECO:0000269" key="2">
    <source>
    </source>
</evidence>
<evidence type="ECO:0000305" key="3"/>
<evidence type="ECO:0007744" key="4">
    <source>
        <dbReference type="PDB" id="6HA1"/>
    </source>
</evidence>
<evidence type="ECO:0007744" key="5">
    <source>
        <dbReference type="PDB" id="6HA8"/>
    </source>
</evidence>
<evidence type="ECO:0007829" key="6">
    <source>
        <dbReference type="PDB" id="7AQC"/>
    </source>
</evidence>
<evidence type="ECO:0007829" key="7">
    <source>
        <dbReference type="PDB" id="8S1P"/>
    </source>
</evidence>
<name>RL16_BACSU</name>
<gene>
    <name evidence="1" type="primary">rplP</name>
    <name type="ordered locus">BSU01230</name>
</gene>
<sequence length="144" mass="16190">MLLPKRVKYRREHRGKMRGRAKGGTEVHFGEFGIQALEASWITNRQIEAARIAMTRYMKRGGKVWIKIFPSKPYTAKPLEVRMGSGKGAPEGWVAVVKPGKVLFEISGVSEEVAREALRLASHKLPIKTKFVKREEIGGESNES</sequence>
<dbReference type="EMBL" id="U43929">
    <property type="protein sequence ID" value="AAC45963.1"/>
    <property type="molecule type" value="Genomic_DNA"/>
</dbReference>
<dbReference type="EMBL" id="D50302">
    <property type="protein sequence ID" value="BAA08838.1"/>
    <property type="molecule type" value="Genomic_DNA"/>
</dbReference>
<dbReference type="EMBL" id="D50303">
    <property type="status" value="NOT_ANNOTATED_CDS"/>
    <property type="molecule type" value="Genomic_DNA"/>
</dbReference>
<dbReference type="EMBL" id="AL009126">
    <property type="protein sequence ID" value="CAB11899.1"/>
    <property type="molecule type" value="Genomic_DNA"/>
</dbReference>
<dbReference type="EMBL" id="X15664">
    <property type="protein sequence ID" value="CAA33698.1"/>
    <property type="molecule type" value="Genomic_DNA"/>
</dbReference>
<dbReference type="EMBL" id="L47971">
    <property type="protein sequence ID" value="AAB06806.1"/>
    <property type="molecule type" value="Genomic_DNA"/>
</dbReference>
<dbReference type="PIR" id="B69696">
    <property type="entry name" value="B69696"/>
</dbReference>
<dbReference type="RefSeq" id="NP_388004.1">
    <property type="nucleotide sequence ID" value="NC_000964.3"/>
</dbReference>
<dbReference type="RefSeq" id="WP_003225801.1">
    <property type="nucleotide sequence ID" value="NZ_OZ025638.1"/>
</dbReference>
<dbReference type="PDB" id="3J9W">
    <property type="method" value="EM"/>
    <property type="resolution" value="3.90 A"/>
    <property type="chains" value="BP=1-144"/>
</dbReference>
<dbReference type="PDB" id="5NJT">
    <property type="method" value="EM"/>
    <property type="resolution" value="3.80 A"/>
    <property type="chains" value="f=1-138"/>
</dbReference>
<dbReference type="PDB" id="6HA1">
    <property type="method" value="EM"/>
    <property type="resolution" value="3.10 A"/>
    <property type="chains" value="M=1-144"/>
</dbReference>
<dbReference type="PDB" id="6HA8">
    <property type="method" value="EM"/>
    <property type="resolution" value="3.50 A"/>
    <property type="chains" value="M=1-144"/>
</dbReference>
<dbReference type="PDB" id="6HTQ">
    <property type="method" value="EM"/>
    <property type="resolution" value="4.50 A"/>
    <property type="chains" value="M=1-135"/>
</dbReference>
<dbReference type="PDB" id="6TNN">
    <property type="method" value="EM"/>
    <property type="resolution" value="3.07 A"/>
    <property type="chains" value="f=1-144"/>
</dbReference>
<dbReference type="PDB" id="6TPQ">
    <property type="method" value="EM"/>
    <property type="resolution" value="3.07 A"/>
    <property type="chains" value="f=1-144"/>
</dbReference>
<dbReference type="PDB" id="7AQC">
    <property type="method" value="EM"/>
    <property type="resolution" value="2.99 A"/>
    <property type="chains" value="M=1-144"/>
</dbReference>
<dbReference type="PDB" id="7AQD">
    <property type="method" value="EM"/>
    <property type="resolution" value="3.10 A"/>
    <property type="chains" value="M=1-144"/>
</dbReference>
<dbReference type="PDB" id="7AS8">
    <property type="method" value="EM"/>
    <property type="resolution" value="2.90 A"/>
    <property type="chains" value="Q=1-144"/>
</dbReference>
<dbReference type="PDB" id="7AS9">
    <property type="method" value="EM"/>
    <property type="resolution" value="3.50 A"/>
    <property type="chains" value="Q=1-144"/>
</dbReference>
<dbReference type="PDB" id="7O5B">
    <property type="method" value="EM"/>
    <property type="resolution" value="3.33 A"/>
    <property type="chains" value="j=1-144"/>
</dbReference>
<dbReference type="PDB" id="7OPE">
    <property type="method" value="EM"/>
    <property type="resolution" value="3.20 A"/>
    <property type="chains" value="Q=1-144"/>
</dbReference>
<dbReference type="PDB" id="7QGU">
    <property type="method" value="EM"/>
    <property type="resolution" value="4.75 A"/>
    <property type="chains" value="M=1-144"/>
</dbReference>
<dbReference type="PDB" id="7QH4">
    <property type="method" value="EM"/>
    <property type="resolution" value="5.45 A"/>
    <property type="chains" value="M=1-144"/>
</dbReference>
<dbReference type="PDB" id="7QV1">
    <property type="method" value="EM"/>
    <property type="resolution" value="3.50 A"/>
    <property type="chains" value="M=1-144"/>
</dbReference>
<dbReference type="PDB" id="7QV2">
    <property type="method" value="EM"/>
    <property type="resolution" value="3.50 A"/>
    <property type="chains" value="M=1-144"/>
</dbReference>
<dbReference type="PDB" id="7QV3">
    <property type="method" value="EM"/>
    <property type="resolution" value="5.14 A"/>
    <property type="chains" value="M=1-144"/>
</dbReference>
<dbReference type="PDB" id="8BUU">
    <property type="method" value="EM"/>
    <property type="resolution" value="2.90 A"/>
    <property type="chains" value="M=1-144"/>
</dbReference>
<dbReference type="PDB" id="8QCQ">
    <property type="method" value="EM"/>
    <property type="resolution" value="2.30 A"/>
    <property type="chains" value="M=1-144"/>
</dbReference>
<dbReference type="PDB" id="8QPP">
    <property type="method" value="EM"/>
    <property type="resolution" value="3.40 A"/>
    <property type="chains" value="j=1-138"/>
</dbReference>
<dbReference type="PDB" id="8R55">
    <property type="method" value="EM"/>
    <property type="resolution" value="3.57 A"/>
    <property type="chains" value="j=1-138"/>
</dbReference>
<dbReference type="PDB" id="8S1P">
    <property type="method" value="EM"/>
    <property type="resolution" value="1.96 A"/>
    <property type="chains" value="M=1-144"/>
</dbReference>
<dbReference type="PDB" id="8S1U">
    <property type="method" value="EM"/>
    <property type="resolution" value="3.40 A"/>
    <property type="chains" value="M=1-144"/>
</dbReference>
<dbReference type="PDBsum" id="3J9W"/>
<dbReference type="PDBsum" id="5NJT"/>
<dbReference type="PDBsum" id="6HA1"/>
<dbReference type="PDBsum" id="6HA8"/>
<dbReference type="PDBsum" id="6HTQ"/>
<dbReference type="PDBsum" id="6TNN"/>
<dbReference type="PDBsum" id="6TPQ"/>
<dbReference type="PDBsum" id="7AQC"/>
<dbReference type="PDBsum" id="7AQD"/>
<dbReference type="PDBsum" id="7AS8"/>
<dbReference type="PDBsum" id="7AS9"/>
<dbReference type="PDBsum" id="7O5B"/>
<dbReference type="PDBsum" id="7OPE"/>
<dbReference type="PDBsum" id="7QGU"/>
<dbReference type="PDBsum" id="7QH4"/>
<dbReference type="PDBsum" id="7QV1"/>
<dbReference type="PDBsum" id="7QV2"/>
<dbReference type="PDBsum" id="7QV3"/>
<dbReference type="PDBsum" id="8BUU"/>
<dbReference type="PDBsum" id="8QCQ"/>
<dbReference type="PDBsum" id="8QPP"/>
<dbReference type="PDBsum" id="8R55"/>
<dbReference type="PDBsum" id="8S1P"/>
<dbReference type="PDBsum" id="8S1U"/>
<dbReference type="EMDB" id="EMD-0176"/>
<dbReference type="EMDB" id="EMD-0177"/>
<dbReference type="EMDB" id="EMD-0270"/>
<dbReference type="EMDB" id="EMD-10535"/>
<dbReference type="EMDB" id="EMD-10543"/>
<dbReference type="EMDB" id="EMD-11862"/>
<dbReference type="EMDB" id="EMD-11864"/>
<dbReference type="EMDB" id="EMD-11889"/>
<dbReference type="EMDB" id="EMD-11890"/>
<dbReference type="EMDB" id="EMD-12734"/>
<dbReference type="EMDB" id="EMD-13017"/>
<dbReference type="EMDB" id="EMD-14157"/>
<dbReference type="EMDB" id="EMD-14158"/>
<dbReference type="EMDB" id="EMD-14159"/>
<dbReference type="EMDB" id="EMD-16246"/>
<dbReference type="EMDB" id="EMD-18332"/>
<dbReference type="EMDB" id="EMD-19638"/>
<dbReference type="EMDB" id="EMD-19641"/>
<dbReference type="EMDB" id="EMD-3656"/>
<dbReference type="SMR" id="P14577"/>
<dbReference type="FunCoup" id="P14577">
    <property type="interactions" value="589"/>
</dbReference>
<dbReference type="STRING" id="224308.BSU01230"/>
<dbReference type="jPOST" id="P14577"/>
<dbReference type="PaxDb" id="224308-BSU01230"/>
<dbReference type="EnsemblBacteria" id="CAB11899">
    <property type="protein sequence ID" value="CAB11899"/>
    <property type="gene ID" value="BSU_01230"/>
</dbReference>
<dbReference type="GeneID" id="86875479"/>
<dbReference type="GeneID" id="936807"/>
<dbReference type="KEGG" id="bsu:BSU01230"/>
<dbReference type="PATRIC" id="fig|224308.179.peg.126"/>
<dbReference type="eggNOG" id="COG0197">
    <property type="taxonomic scope" value="Bacteria"/>
</dbReference>
<dbReference type="InParanoid" id="P14577"/>
<dbReference type="OrthoDB" id="9802589at2"/>
<dbReference type="PhylomeDB" id="P14577"/>
<dbReference type="BioCyc" id="BSUB:BSU01230-MONOMER"/>
<dbReference type="PRO" id="PR:P14577"/>
<dbReference type="Proteomes" id="UP000001570">
    <property type="component" value="Chromosome"/>
</dbReference>
<dbReference type="GO" id="GO:0022625">
    <property type="term" value="C:cytosolic large ribosomal subunit"/>
    <property type="evidence" value="ECO:0000318"/>
    <property type="project" value="GO_Central"/>
</dbReference>
<dbReference type="GO" id="GO:0019843">
    <property type="term" value="F:rRNA binding"/>
    <property type="evidence" value="ECO:0000318"/>
    <property type="project" value="GO_Central"/>
</dbReference>
<dbReference type="GO" id="GO:0003735">
    <property type="term" value="F:structural constituent of ribosome"/>
    <property type="evidence" value="ECO:0000318"/>
    <property type="project" value="GO_Central"/>
</dbReference>
<dbReference type="GO" id="GO:0000049">
    <property type="term" value="F:tRNA binding"/>
    <property type="evidence" value="ECO:0007669"/>
    <property type="project" value="UniProtKB-KW"/>
</dbReference>
<dbReference type="GO" id="GO:0006412">
    <property type="term" value="P:translation"/>
    <property type="evidence" value="ECO:0007669"/>
    <property type="project" value="UniProtKB-UniRule"/>
</dbReference>
<dbReference type="CDD" id="cd01433">
    <property type="entry name" value="Ribosomal_L16_L10e"/>
    <property type="match status" value="1"/>
</dbReference>
<dbReference type="FunFam" id="3.90.1170.10:FF:000001">
    <property type="entry name" value="50S ribosomal protein L16"/>
    <property type="match status" value="1"/>
</dbReference>
<dbReference type="Gene3D" id="3.90.1170.10">
    <property type="entry name" value="Ribosomal protein L10e/L16"/>
    <property type="match status" value="1"/>
</dbReference>
<dbReference type="HAMAP" id="MF_01342">
    <property type="entry name" value="Ribosomal_uL16"/>
    <property type="match status" value="1"/>
</dbReference>
<dbReference type="InterPro" id="IPR047873">
    <property type="entry name" value="Ribosomal_uL16"/>
</dbReference>
<dbReference type="InterPro" id="IPR000114">
    <property type="entry name" value="Ribosomal_uL16_bact-type"/>
</dbReference>
<dbReference type="InterPro" id="IPR020798">
    <property type="entry name" value="Ribosomal_uL16_CS"/>
</dbReference>
<dbReference type="InterPro" id="IPR016180">
    <property type="entry name" value="Ribosomal_uL16_dom"/>
</dbReference>
<dbReference type="InterPro" id="IPR036920">
    <property type="entry name" value="Ribosomal_uL16_sf"/>
</dbReference>
<dbReference type="NCBIfam" id="TIGR01164">
    <property type="entry name" value="rplP_bact"/>
    <property type="match status" value="1"/>
</dbReference>
<dbReference type="PANTHER" id="PTHR12220">
    <property type="entry name" value="50S/60S RIBOSOMAL PROTEIN L16"/>
    <property type="match status" value="1"/>
</dbReference>
<dbReference type="PANTHER" id="PTHR12220:SF13">
    <property type="entry name" value="LARGE RIBOSOMAL SUBUNIT PROTEIN UL16M"/>
    <property type="match status" value="1"/>
</dbReference>
<dbReference type="Pfam" id="PF00252">
    <property type="entry name" value="Ribosomal_L16"/>
    <property type="match status" value="1"/>
</dbReference>
<dbReference type="PRINTS" id="PR00060">
    <property type="entry name" value="RIBOSOMALL16"/>
</dbReference>
<dbReference type="SUPFAM" id="SSF54686">
    <property type="entry name" value="Ribosomal protein L16p/L10e"/>
    <property type="match status" value="1"/>
</dbReference>
<dbReference type="PROSITE" id="PS00586">
    <property type="entry name" value="RIBOSOMAL_L16_1"/>
    <property type="match status" value="1"/>
</dbReference>
<dbReference type="PROSITE" id="PS00701">
    <property type="entry name" value="RIBOSOMAL_L16_2"/>
    <property type="match status" value="1"/>
</dbReference>
<protein>
    <recommendedName>
        <fullName evidence="1">Large ribosomal subunit protein uL16</fullName>
    </recommendedName>
    <alternativeName>
        <fullName evidence="3">50S ribosomal protein L16</fullName>
    </alternativeName>
</protein>
<feature type="chain" id="PRO_0000062043" description="Large ribosomal subunit protein uL16">
    <location>
        <begin position="1"/>
        <end position="144"/>
    </location>
</feature>
<feature type="strand" evidence="7">
    <location>
        <begin position="29"/>
        <end position="38"/>
    </location>
</feature>
<feature type="strand" evidence="7">
    <location>
        <begin position="40"/>
        <end position="43"/>
    </location>
</feature>
<feature type="helix" evidence="7">
    <location>
        <begin position="44"/>
        <end position="58"/>
    </location>
</feature>
<feature type="strand" evidence="6">
    <location>
        <begin position="59"/>
        <end position="61"/>
    </location>
</feature>
<feature type="strand" evidence="7">
    <location>
        <begin position="62"/>
        <end position="66"/>
    </location>
</feature>
<feature type="strand" evidence="7">
    <location>
        <begin position="72"/>
        <end position="76"/>
    </location>
</feature>
<feature type="strand" evidence="7">
    <location>
        <begin position="89"/>
        <end position="97"/>
    </location>
</feature>
<feature type="strand" evidence="7">
    <location>
        <begin position="102"/>
        <end position="109"/>
    </location>
</feature>
<feature type="helix" evidence="7">
    <location>
        <begin position="111"/>
        <end position="122"/>
    </location>
</feature>
<feature type="strand" evidence="7">
    <location>
        <begin position="125"/>
        <end position="127"/>
    </location>
</feature>
<feature type="strand" evidence="7">
    <location>
        <begin position="129"/>
        <end position="133"/>
    </location>
</feature>
<proteinExistence type="evidence at protein level"/>